<reference key="1">
    <citation type="journal article" date="2005" name="Science">
        <title>The transcriptional landscape of the mammalian genome.</title>
        <authorList>
            <person name="Carninci P."/>
            <person name="Kasukawa T."/>
            <person name="Katayama S."/>
            <person name="Gough J."/>
            <person name="Frith M.C."/>
            <person name="Maeda N."/>
            <person name="Oyama R."/>
            <person name="Ravasi T."/>
            <person name="Lenhard B."/>
            <person name="Wells C."/>
            <person name="Kodzius R."/>
            <person name="Shimokawa K."/>
            <person name="Bajic V.B."/>
            <person name="Brenner S.E."/>
            <person name="Batalov S."/>
            <person name="Forrest A.R."/>
            <person name="Zavolan M."/>
            <person name="Davis M.J."/>
            <person name="Wilming L.G."/>
            <person name="Aidinis V."/>
            <person name="Allen J.E."/>
            <person name="Ambesi-Impiombato A."/>
            <person name="Apweiler R."/>
            <person name="Aturaliya R.N."/>
            <person name="Bailey T.L."/>
            <person name="Bansal M."/>
            <person name="Baxter L."/>
            <person name="Beisel K.W."/>
            <person name="Bersano T."/>
            <person name="Bono H."/>
            <person name="Chalk A.M."/>
            <person name="Chiu K.P."/>
            <person name="Choudhary V."/>
            <person name="Christoffels A."/>
            <person name="Clutterbuck D.R."/>
            <person name="Crowe M.L."/>
            <person name="Dalla E."/>
            <person name="Dalrymple B.P."/>
            <person name="de Bono B."/>
            <person name="Della Gatta G."/>
            <person name="di Bernardo D."/>
            <person name="Down T."/>
            <person name="Engstrom P."/>
            <person name="Fagiolini M."/>
            <person name="Faulkner G."/>
            <person name="Fletcher C.F."/>
            <person name="Fukushima T."/>
            <person name="Furuno M."/>
            <person name="Futaki S."/>
            <person name="Gariboldi M."/>
            <person name="Georgii-Hemming P."/>
            <person name="Gingeras T.R."/>
            <person name="Gojobori T."/>
            <person name="Green R.E."/>
            <person name="Gustincich S."/>
            <person name="Harbers M."/>
            <person name="Hayashi Y."/>
            <person name="Hensch T.K."/>
            <person name="Hirokawa N."/>
            <person name="Hill D."/>
            <person name="Huminiecki L."/>
            <person name="Iacono M."/>
            <person name="Ikeo K."/>
            <person name="Iwama A."/>
            <person name="Ishikawa T."/>
            <person name="Jakt M."/>
            <person name="Kanapin A."/>
            <person name="Katoh M."/>
            <person name="Kawasawa Y."/>
            <person name="Kelso J."/>
            <person name="Kitamura H."/>
            <person name="Kitano H."/>
            <person name="Kollias G."/>
            <person name="Krishnan S.P."/>
            <person name="Kruger A."/>
            <person name="Kummerfeld S.K."/>
            <person name="Kurochkin I.V."/>
            <person name="Lareau L.F."/>
            <person name="Lazarevic D."/>
            <person name="Lipovich L."/>
            <person name="Liu J."/>
            <person name="Liuni S."/>
            <person name="McWilliam S."/>
            <person name="Madan Babu M."/>
            <person name="Madera M."/>
            <person name="Marchionni L."/>
            <person name="Matsuda H."/>
            <person name="Matsuzawa S."/>
            <person name="Miki H."/>
            <person name="Mignone F."/>
            <person name="Miyake S."/>
            <person name="Morris K."/>
            <person name="Mottagui-Tabar S."/>
            <person name="Mulder N."/>
            <person name="Nakano N."/>
            <person name="Nakauchi H."/>
            <person name="Ng P."/>
            <person name="Nilsson R."/>
            <person name="Nishiguchi S."/>
            <person name="Nishikawa S."/>
            <person name="Nori F."/>
            <person name="Ohara O."/>
            <person name="Okazaki Y."/>
            <person name="Orlando V."/>
            <person name="Pang K.C."/>
            <person name="Pavan W.J."/>
            <person name="Pavesi G."/>
            <person name="Pesole G."/>
            <person name="Petrovsky N."/>
            <person name="Piazza S."/>
            <person name="Reed J."/>
            <person name="Reid J.F."/>
            <person name="Ring B.Z."/>
            <person name="Ringwald M."/>
            <person name="Rost B."/>
            <person name="Ruan Y."/>
            <person name="Salzberg S.L."/>
            <person name="Sandelin A."/>
            <person name="Schneider C."/>
            <person name="Schoenbach C."/>
            <person name="Sekiguchi K."/>
            <person name="Semple C.A."/>
            <person name="Seno S."/>
            <person name="Sessa L."/>
            <person name="Sheng Y."/>
            <person name="Shibata Y."/>
            <person name="Shimada H."/>
            <person name="Shimada K."/>
            <person name="Silva D."/>
            <person name="Sinclair B."/>
            <person name="Sperling S."/>
            <person name="Stupka E."/>
            <person name="Sugiura K."/>
            <person name="Sultana R."/>
            <person name="Takenaka Y."/>
            <person name="Taki K."/>
            <person name="Tammoja K."/>
            <person name="Tan S.L."/>
            <person name="Tang S."/>
            <person name="Taylor M.S."/>
            <person name="Tegner J."/>
            <person name="Teichmann S.A."/>
            <person name="Ueda H.R."/>
            <person name="van Nimwegen E."/>
            <person name="Verardo R."/>
            <person name="Wei C.L."/>
            <person name="Yagi K."/>
            <person name="Yamanishi H."/>
            <person name="Zabarovsky E."/>
            <person name="Zhu S."/>
            <person name="Zimmer A."/>
            <person name="Hide W."/>
            <person name="Bult C."/>
            <person name="Grimmond S.M."/>
            <person name="Teasdale R.D."/>
            <person name="Liu E.T."/>
            <person name="Brusic V."/>
            <person name="Quackenbush J."/>
            <person name="Wahlestedt C."/>
            <person name="Mattick J.S."/>
            <person name="Hume D.A."/>
            <person name="Kai C."/>
            <person name="Sasaki D."/>
            <person name="Tomaru Y."/>
            <person name="Fukuda S."/>
            <person name="Kanamori-Katayama M."/>
            <person name="Suzuki M."/>
            <person name="Aoki J."/>
            <person name="Arakawa T."/>
            <person name="Iida J."/>
            <person name="Imamura K."/>
            <person name="Itoh M."/>
            <person name="Kato T."/>
            <person name="Kawaji H."/>
            <person name="Kawagashira N."/>
            <person name="Kawashima T."/>
            <person name="Kojima M."/>
            <person name="Kondo S."/>
            <person name="Konno H."/>
            <person name="Nakano K."/>
            <person name="Ninomiya N."/>
            <person name="Nishio T."/>
            <person name="Okada M."/>
            <person name="Plessy C."/>
            <person name="Shibata K."/>
            <person name="Shiraki T."/>
            <person name="Suzuki S."/>
            <person name="Tagami M."/>
            <person name="Waki K."/>
            <person name="Watahiki A."/>
            <person name="Okamura-Oho Y."/>
            <person name="Suzuki H."/>
            <person name="Kawai J."/>
            <person name="Hayashizaki Y."/>
        </authorList>
    </citation>
    <scope>NUCLEOTIDE SEQUENCE [LARGE SCALE MRNA]</scope>
    <source>
        <strain>C57BL/6J</strain>
        <tissue>Testis</tissue>
    </source>
</reference>
<reference key="2">
    <citation type="journal article" date="2004" name="Genome Res.">
        <title>The status, quality, and expansion of the NIH full-length cDNA project: the Mammalian Gene Collection (MGC).</title>
        <authorList>
            <consortium name="The MGC Project Team"/>
        </authorList>
    </citation>
    <scope>NUCLEOTIDE SEQUENCE [LARGE SCALE MRNA]</scope>
    <source>
        <tissue>Testis</tissue>
    </source>
</reference>
<reference key="3">
    <citation type="journal article" date="2016" name="Proc. Natl. Acad. Sci. U.S.A.">
        <title>Genome engineering uncovers 54 evolutionarily conserved and testis-enriched genes that are not required for male fertility in mice.</title>
        <authorList>
            <person name="Miyata H."/>
            <person name="Castaneda J.M."/>
            <person name="Fujihara Y."/>
            <person name="Yu Z."/>
            <person name="Archambeault D.R."/>
            <person name="Isotani A."/>
            <person name="Kiyozumi D."/>
            <person name="Kriseman M.L."/>
            <person name="Mashiko D."/>
            <person name="Matsumura T."/>
            <person name="Matzuk R.M."/>
            <person name="Mori M."/>
            <person name="Noda T."/>
            <person name="Oji A."/>
            <person name="Okabe M."/>
            <person name="Prunskaite-Hyyrylainen R."/>
            <person name="Ramirez-Solis R."/>
            <person name="Satouh Y."/>
            <person name="Zhang Q."/>
            <person name="Ikawa M."/>
            <person name="Matzuk M.M."/>
        </authorList>
    </citation>
    <scope>DISRUPTION PHENOTYPE</scope>
    <scope>TISSUE SPECIFICITY</scope>
</reference>
<gene>
    <name evidence="3" type="primary">Tex56</name>
</gene>
<name>TEX56_MOUSE</name>
<organism>
    <name type="scientific">Mus musculus</name>
    <name type="common">Mouse</name>
    <dbReference type="NCBI Taxonomy" id="10090"/>
    <lineage>
        <taxon>Eukaryota</taxon>
        <taxon>Metazoa</taxon>
        <taxon>Chordata</taxon>
        <taxon>Craniata</taxon>
        <taxon>Vertebrata</taxon>
        <taxon>Euteleostomi</taxon>
        <taxon>Mammalia</taxon>
        <taxon>Eutheria</taxon>
        <taxon>Euarchontoglires</taxon>
        <taxon>Glires</taxon>
        <taxon>Rodentia</taxon>
        <taxon>Myomorpha</taxon>
        <taxon>Muroidea</taxon>
        <taxon>Muridae</taxon>
        <taxon>Murinae</taxon>
        <taxon>Mus</taxon>
        <taxon>Mus</taxon>
    </lineage>
</organism>
<sequence length="227" mass="26076">MDVDIDPEQLFTEKMPKNYAQPDVLNHTFDLLSNLHKLLPNHLVEVLHSYRSEEDKNKCEKPEFSGLEKILARHQLPKEISLSPKPSLMPSWRRRIINNISGNWKKCHLWQKSTYEPPMGTIVARWTKKNLQPTEDLKSVIQRLSALGPIISVTPSGRQSAVVVFRDITSACKAVSAFQSMSGGSMFQCSWQHRFMAKNKTWSRKCTSKVHLEKRESTVGEPQELHN</sequence>
<accession>Q497N7</accession>
<accession>Q9D433</accession>
<accession>Q9D460</accession>
<protein>
    <recommendedName>
        <fullName>Testis expressed protein 56</fullName>
    </recommendedName>
</protein>
<comment type="tissue specificity">
    <text evidence="1">Expressed predominantly in the testis.</text>
</comment>
<comment type="disruption phenotype">
    <text evidence="1">Deficient mice are viable and have normal fertility.</text>
</comment>
<comment type="sequence caution" evidence="2">
    <conflict type="frameshift">
        <sequence resource="EMBL-CDS" id="BAB30424"/>
    </conflict>
</comment>
<comment type="sequence caution" evidence="2">
    <conflict type="frameshift">
        <sequence resource="EMBL-CDS" id="BAB30456"/>
    </conflict>
</comment>
<feature type="chain" id="PRO_0000297589" description="Testis expressed protein 56">
    <location>
        <begin position="1"/>
        <end position="227"/>
    </location>
</feature>
<feature type="sequence conflict" description="In Ref. 1; BAB30456." evidence="2" ref="1">
    <original>G</original>
    <variation>A</variation>
    <location>
        <position position="102"/>
    </location>
</feature>
<feature type="sequence conflict" description="In Ref. 1; BAB30424." evidence="2" ref="1">
    <original>K</original>
    <variation>N</variation>
    <location>
        <position position="129"/>
    </location>
</feature>
<feature type="sequence conflict" description="In Ref. 1; BAB30456." evidence="2" ref="1">
    <original>L</original>
    <variation>Q</variation>
    <location>
        <position position="144"/>
    </location>
</feature>
<evidence type="ECO:0000269" key="1">
    <source>
    </source>
</evidence>
<evidence type="ECO:0000305" key="2"/>
<evidence type="ECO:0000312" key="3">
    <source>
        <dbReference type="MGI" id="MGI:1914011"/>
    </source>
</evidence>
<keyword id="KW-1185">Reference proteome</keyword>
<dbReference type="EMBL" id="AK016778">
    <property type="protein sequence ID" value="BAB30424.1"/>
    <property type="status" value="ALT_FRAME"/>
    <property type="molecule type" value="mRNA"/>
</dbReference>
<dbReference type="EMBL" id="AK016838">
    <property type="protein sequence ID" value="BAB30456.1"/>
    <property type="status" value="ALT_FRAME"/>
    <property type="molecule type" value="mRNA"/>
</dbReference>
<dbReference type="EMBL" id="BC100450">
    <property type="protein sequence ID" value="AAI00451.1"/>
    <property type="molecule type" value="mRNA"/>
</dbReference>
<dbReference type="EMBL" id="BC145747">
    <property type="protein sequence ID" value="AAI45748.1"/>
    <property type="molecule type" value="mRNA"/>
</dbReference>
<dbReference type="CCDS" id="CCDS49233.1"/>
<dbReference type="RefSeq" id="NP_080026.2">
    <property type="nucleotide sequence ID" value="NM_025750.3"/>
</dbReference>
<dbReference type="RefSeq" id="XP_011242631.1">
    <property type="nucleotide sequence ID" value="XM_011244329.1"/>
</dbReference>
<dbReference type="SMR" id="Q497N7"/>
<dbReference type="STRING" id="10090.ENSMUSP00000125324"/>
<dbReference type="iPTMnet" id="Q497N7"/>
<dbReference type="PhosphoSitePlus" id="Q497N7"/>
<dbReference type="PaxDb" id="10090-ENSMUSP00000125324"/>
<dbReference type="DNASU" id="66761"/>
<dbReference type="Ensembl" id="ENSMUST00000160279.8">
    <property type="protein sequence ID" value="ENSMUSP00000125324.2"/>
    <property type="gene ID" value="ENSMUSG00000021415.14"/>
</dbReference>
<dbReference type="Ensembl" id="ENSMUST00000160905.2">
    <property type="protein sequence ID" value="ENSMUSP00000125206.2"/>
    <property type="gene ID" value="ENSMUSG00000021415.14"/>
</dbReference>
<dbReference type="GeneID" id="66761"/>
<dbReference type="KEGG" id="mmu:66761"/>
<dbReference type="UCSC" id="uc007qbt.2">
    <property type="organism name" value="mouse"/>
</dbReference>
<dbReference type="AGR" id="MGI:1914011"/>
<dbReference type="CTD" id="66761"/>
<dbReference type="MGI" id="MGI:1914011">
    <property type="gene designation" value="Tex56"/>
</dbReference>
<dbReference type="VEuPathDB" id="HostDB:ENSMUSG00000021415"/>
<dbReference type="eggNOG" id="ENOG502S904">
    <property type="taxonomic scope" value="Eukaryota"/>
</dbReference>
<dbReference type="GeneTree" id="ENSGT00390000008360"/>
<dbReference type="HOGENOM" id="CLU_115219_0_0_1"/>
<dbReference type="InParanoid" id="Q497N7"/>
<dbReference type="OMA" id="FQCAWQQ"/>
<dbReference type="OrthoDB" id="6077037at2759"/>
<dbReference type="PhylomeDB" id="Q497N7"/>
<dbReference type="TreeFam" id="TF341213"/>
<dbReference type="BioGRID-ORCS" id="66761">
    <property type="hits" value="0 hits in 76 CRISPR screens"/>
</dbReference>
<dbReference type="PRO" id="PR:Q497N7"/>
<dbReference type="Proteomes" id="UP000000589">
    <property type="component" value="Chromosome 13"/>
</dbReference>
<dbReference type="RNAct" id="Q497N7">
    <property type="molecule type" value="protein"/>
</dbReference>
<dbReference type="Bgee" id="ENSMUSG00000021415">
    <property type="expression patterns" value="Expressed in seminiferous tubule of testis and 8 other cell types or tissues"/>
</dbReference>
<dbReference type="InterPro" id="IPR027827">
    <property type="entry name" value="Tex56"/>
</dbReference>
<dbReference type="PANTHER" id="PTHR35968">
    <property type="entry name" value="CHROMOSOME 6 C6ORF201 HOMOLOG"/>
    <property type="match status" value="1"/>
</dbReference>
<dbReference type="PANTHER" id="PTHR35968:SF1">
    <property type="entry name" value="TESTIS EXPRESSED PROTEIN 56"/>
    <property type="match status" value="1"/>
</dbReference>
<dbReference type="Pfam" id="PF15023">
    <property type="entry name" value="DUF4523"/>
    <property type="match status" value="1"/>
</dbReference>
<proteinExistence type="evidence at transcript level"/>